<organism>
    <name type="scientific">Vibrio vulnificus (strain YJ016)</name>
    <dbReference type="NCBI Taxonomy" id="196600"/>
    <lineage>
        <taxon>Bacteria</taxon>
        <taxon>Pseudomonadati</taxon>
        <taxon>Pseudomonadota</taxon>
        <taxon>Gammaproteobacteria</taxon>
        <taxon>Vibrionales</taxon>
        <taxon>Vibrionaceae</taxon>
        <taxon>Vibrio</taxon>
    </lineage>
</organism>
<accession>Q7MN34</accession>
<dbReference type="EC" id="3.1.-.-" evidence="1"/>
<dbReference type="EMBL" id="BA000037">
    <property type="protein sequence ID" value="BAC93647.1"/>
    <property type="molecule type" value="Genomic_DNA"/>
</dbReference>
<dbReference type="RefSeq" id="WP_011149692.1">
    <property type="nucleotide sequence ID" value="NC_005139.1"/>
</dbReference>
<dbReference type="SMR" id="Q7MN34"/>
<dbReference type="STRING" id="672.VV93_v1c08200"/>
<dbReference type="KEGG" id="vvy:VV0883"/>
<dbReference type="eggNOG" id="COG0258">
    <property type="taxonomic scope" value="Bacteria"/>
</dbReference>
<dbReference type="HOGENOM" id="CLU_004675_1_2_6"/>
<dbReference type="Proteomes" id="UP000002675">
    <property type="component" value="Chromosome I"/>
</dbReference>
<dbReference type="GO" id="GO:0008409">
    <property type="term" value="F:5'-3' exonuclease activity"/>
    <property type="evidence" value="ECO:0007669"/>
    <property type="project" value="InterPro"/>
</dbReference>
<dbReference type="GO" id="GO:0017108">
    <property type="term" value="F:5'-flap endonuclease activity"/>
    <property type="evidence" value="ECO:0007669"/>
    <property type="project" value="UniProtKB-UniRule"/>
</dbReference>
<dbReference type="GO" id="GO:0003677">
    <property type="term" value="F:DNA binding"/>
    <property type="evidence" value="ECO:0007669"/>
    <property type="project" value="UniProtKB-UniRule"/>
</dbReference>
<dbReference type="GO" id="GO:0000287">
    <property type="term" value="F:magnesium ion binding"/>
    <property type="evidence" value="ECO:0007669"/>
    <property type="project" value="UniProtKB-UniRule"/>
</dbReference>
<dbReference type="GO" id="GO:0030955">
    <property type="term" value="F:potassium ion binding"/>
    <property type="evidence" value="ECO:0007669"/>
    <property type="project" value="UniProtKB-UniRule"/>
</dbReference>
<dbReference type="GO" id="GO:0033567">
    <property type="term" value="P:DNA replication, Okazaki fragment processing"/>
    <property type="evidence" value="ECO:0007669"/>
    <property type="project" value="UniProtKB-UniRule"/>
</dbReference>
<dbReference type="CDD" id="cd09898">
    <property type="entry name" value="H3TH_53EXO"/>
    <property type="match status" value="1"/>
</dbReference>
<dbReference type="CDD" id="cd09859">
    <property type="entry name" value="PIN_53EXO"/>
    <property type="match status" value="1"/>
</dbReference>
<dbReference type="FunFam" id="1.10.150.20:FF:000003">
    <property type="entry name" value="DNA polymerase I"/>
    <property type="match status" value="1"/>
</dbReference>
<dbReference type="Gene3D" id="1.10.150.20">
    <property type="entry name" value="5' to 3' exonuclease, C-terminal subdomain"/>
    <property type="match status" value="1"/>
</dbReference>
<dbReference type="Gene3D" id="3.40.50.1010">
    <property type="entry name" value="5'-nuclease"/>
    <property type="match status" value="1"/>
</dbReference>
<dbReference type="HAMAP" id="MF_01192">
    <property type="entry name" value="Xni"/>
    <property type="match status" value="1"/>
</dbReference>
<dbReference type="InterPro" id="IPR020046">
    <property type="entry name" value="5-3_exonucl_a-hlix_arch_N"/>
</dbReference>
<dbReference type="InterPro" id="IPR002421">
    <property type="entry name" value="5-3_exonuclease"/>
</dbReference>
<dbReference type="InterPro" id="IPR036279">
    <property type="entry name" value="5-3_exonuclease_C_sf"/>
</dbReference>
<dbReference type="InterPro" id="IPR020045">
    <property type="entry name" value="DNA_polI_H3TH"/>
</dbReference>
<dbReference type="InterPro" id="IPR038969">
    <property type="entry name" value="FEN"/>
</dbReference>
<dbReference type="InterPro" id="IPR008918">
    <property type="entry name" value="HhH2"/>
</dbReference>
<dbReference type="InterPro" id="IPR029060">
    <property type="entry name" value="PIN-like_dom_sf"/>
</dbReference>
<dbReference type="InterPro" id="IPR022895">
    <property type="entry name" value="Xni"/>
</dbReference>
<dbReference type="NCBIfam" id="NF007017">
    <property type="entry name" value="PRK09482.1"/>
    <property type="match status" value="1"/>
</dbReference>
<dbReference type="PANTHER" id="PTHR42646:SF2">
    <property type="entry name" value="5'-3' EXONUCLEASE FAMILY PROTEIN"/>
    <property type="match status" value="1"/>
</dbReference>
<dbReference type="PANTHER" id="PTHR42646">
    <property type="entry name" value="FLAP ENDONUCLEASE XNI"/>
    <property type="match status" value="1"/>
</dbReference>
<dbReference type="Pfam" id="PF01367">
    <property type="entry name" value="5_3_exonuc"/>
    <property type="match status" value="1"/>
</dbReference>
<dbReference type="Pfam" id="PF02739">
    <property type="entry name" value="5_3_exonuc_N"/>
    <property type="match status" value="1"/>
</dbReference>
<dbReference type="SMART" id="SM00475">
    <property type="entry name" value="53EXOc"/>
    <property type="match status" value="1"/>
</dbReference>
<dbReference type="SMART" id="SM00279">
    <property type="entry name" value="HhH2"/>
    <property type="match status" value="1"/>
</dbReference>
<dbReference type="SUPFAM" id="SSF47807">
    <property type="entry name" value="5' to 3' exonuclease, C-terminal subdomain"/>
    <property type="match status" value="1"/>
</dbReference>
<dbReference type="SUPFAM" id="SSF88723">
    <property type="entry name" value="PIN domain-like"/>
    <property type="match status" value="1"/>
</dbReference>
<protein>
    <recommendedName>
        <fullName evidence="1">Flap endonuclease Xni</fullName>
        <shortName evidence="1">FEN</shortName>
        <ecNumber evidence="1">3.1.-.-</ecNumber>
    </recommendedName>
</protein>
<feature type="chain" id="PRO_0000297891" description="Flap endonuclease Xni">
    <location>
        <begin position="1"/>
        <end position="259"/>
    </location>
</feature>
<feature type="domain" description="5'-3' exonuclease" evidence="1">
    <location>
        <begin position="165"/>
        <end position="255"/>
    </location>
</feature>
<feature type="region of interest" description="Interaction with DNA" evidence="1">
    <location>
        <begin position="189"/>
        <end position="194"/>
    </location>
</feature>
<feature type="binding site" evidence="1">
    <location>
        <position position="109"/>
    </location>
    <ligand>
        <name>Mg(2+)</name>
        <dbReference type="ChEBI" id="CHEBI:18420"/>
    </ligand>
</feature>
<feature type="binding site" evidence="1">
    <location>
        <position position="176"/>
    </location>
    <ligand>
        <name>K(+)</name>
        <dbReference type="ChEBI" id="CHEBI:29103"/>
    </ligand>
</feature>
<feature type="binding site" evidence="1">
    <location>
        <position position="187"/>
    </location>
    <ligand>
        <name>K(+)</name>
        <dbReference type="ChEBI" id="CHEBI:29103"/>
    </ligand>
</feature>
<feature type="binding site" evidence="1">
    <location>
        <position position="190"/>
    </location>
    <ligand>
        <name>K(+)</name>
        <dbReference type="ChEBI" id="CHEBI:29103"/>
    </ligand>
</feature>
<sequence length="259" mass="29346">MAIHLVIIDALNLIRRVHSAQPDPTDIANTIQNTCRTLQRIISESHPTHIVAVFDHLGSDRGWRAEILPEYKQGRKPMPEPLLNGLEKIQDAWWQLGIDSLLSEGDEADDLVATLACKVAQHGEKVTIISTDKGYCQLLSPTLQIRDYFQHRWLDQPFIEQEFGVKPQQLSDYWGLTGISSSQVTGIPGIGPKAAKEILSQFDDIEQAFLSPDLPKKYRTKFDQHIELARRCKRVSALKTDIELGFNLQDLRFTANETH</sequence>
<evidence type="ECO:0000255" key="1">
    <source>
        <dbReference type="HAMAP-Rule" id="MF_01192"/>
    </source>
</evidence>
<keyword id="KW-0238">DNA-binding</keyword>
<keyword id="KW-0255">Endonuclease</keyword>
<keyword id="KW-0378">Hydrolase</keyword>
<keyword id="KW-0460">Magnesium</keyword>
<keyword id="KW-0479">Metal-binding</keyword>
<keyword id="KW-0540">Nuclease</keyword>
<keyword id="KW-0630">Potassium</keyword>
<proteinExistence type="inferred from homology"/>
<gene>
    <name evidence="1" type="primary">xni</name>
    <name evidence="1" type="synonym">ygdG</name>
    <name type="ordered locus">VV0883</name>
</gene>
<comment type="function">
    <text evidence="1">Has flap endonuclease activity. During DNA replication, flap endonucleases cleave the 5'-overhanging flap structure that is generated by displacement synthesis when DNA polymerase encounters the 5'-end of a downstream Okazaki fragment.</text>
</comment>
<comment type="cofactor">
    <cofactor evidence="1">
        <name>Mg(2+)</name>
        <dbReference type="ChEBI" id="CHEBI:18420"/>
    </cofactor>
    <text evidence="1">Binds 2 Mg(2+) per subunit. Only one magnesium ion has a direct interaction with the protein, the other interactions are indirect.</text>
</comment>
<comment type="cofactor">
    <cofactor evidence="1">
        <name>K(+)</name>
        <dbReference type="ChEBI" id="CHEBI:29103"/>
    </cofactor>
    <text evidence="1">Binds 1 K(+) per subunit. The potassium ion strongly increases the affinity for DNA.</text>
</comment>
<comment type="similarity">
    <text evidence="1">Belongs to the Xni family.</text>
</comment>
<reference key="1">
    <citation type="journal article" date="2003" name="Genome Res.">
        <title>Comparative genome analysis of Vibrio vulnificus, a marine pathogen.</title>
        <authorList>
            <person name="Chen C.-Y."/>
            <person name="Wu K.-M."/>
            <person name="Chang Y.-C."/>
            <person name="Chang C.-H."/>
            <person name="Tsai H.-C."/>
            <person name="Liao T.-L."/>
            <person name="Liu Y.-M."/>
            <person name="Chen H.-J."/>
            <person name="Shen A.B.-T."/>
            <person name="Li J.-C."/>
            <person name="Su T.-L."/>
            <person name="Shao C.-P."/>
            <person name="Lee C.-T."/>
            <person name="Hor L.-I."/>
            <person name="Tsai S.-F."/>
        </authorList>
    </citation>
    <scope>NUCLEOTIDE SEQUENCE [LARGE SCALE GENOMIC DNA]</scope>
    <source>
        <strain>YJ016</strain>
    </source>
</reference>
<name>XNI_VIBVY</name>